<evidence type="ECO:0000250" key="1"/>
<evidence type="ECO:0000255" key="2"/>
<evidence type="ECO:0000305" key="3"/>
<reference key="1">
    <citation type="journal article" date="2007" name="Proc. Natl. Acad. Sci. U.S.A.">
        <title>Independent sorting-out of thousands of duplicated gene pairs in two yeast species descended from a whole-genome duplication.</title>
        <authorList>
            <person name="Scannell D.R."/>
            <person name="Frank A.C."/>
            <person name="Conant G.C."/>
            <person name="Byrne K.P."/>
            <person name="Woolfit M."/>
            <person name="Wolfe K.H."/>
        </authorList>
    </citation>
    <scope>NUCLEOTIDE SEQUENCE [LARGE SCALE GENOMIC DNA]</scope>
    <source>
        <strain>ATCC 22028 / DSM 70294 / BCRC 21397 / CBS 2163 / NBRC 10782 / NRRL Y-8283 / UCD 57-17</strain>
    </source>
</reference>
<organism>
    <name type="scientific">Vanderwaltozyma polyspora (strain ATCC 22028 / DSM 70294 / BCRC 21397 / CBS 2163 / NBRC 10782 / NRRL Y-8283 / UCD 57-17)</name>
    <name type="common">Kluyveromyces polysporus</name>
    <dbReference type="NCBI Taxonomy" id="436907"/>
    <lineage>
        <taxon>Eukaryota</taxon>
        <taxon>Fungi</taxon>
        <taxon>Dikarya</taxon>
        <taxon>Ascomycota</taxon>
        <taxon>Saccharomycotina</taxon>
        <taxon>Saccharomycetes</taxon>
        <taxon>Saccharomycetales</taxon>
        <taxon>Saccharomycetaceae</taxon>
        <taxon>Vanderwaltozyma</taxon>
    </lineage>
</organism>
<protein>
    <recommendedName>
        <fullName>Outer spore wall protein 5</fullName>
    </recommendedName>
</protein>
<feature type="chain" id="PRO_0000405525" description="Outer spore wall protein 5">
    <location>
        <begin position="1"/>
        <end position="162"/>
    </location>
</feature>
<feature type="topological domain" description="Cytoplasmic" evidence="2">
    <location>
        <position position="1"/>
    </location>
</feature>
<feature type="transmembrane region" description="Helical" evidence="2">
    <location>
        <begin position="2"/>
        <end position="22"/>
    </location>
</feature>
<feature type="topological domain" description="Extracellular" evidence="2">
    <location>
        <begin position="23"/>
        <end position="26"/>
    </location>
</feature>
<feature type="transmembrane region" description="Helical" evidence="2">
    <location>
        <begin position="27"/>
        <end position="47"/>
    </location>
</feature>
<feature type="topological domain" description="Cytoplasmic" evidence="2">
    <location>
        <begin position="48"/>
        <end position="162"/>
    </location>
</feature>
<comment type="function">
    <text evidence="1">Involved in spore wall assembly.</text>
</comment>
<comment type="subcellular location">
    <subcellularLocation>
        <location evidence="1">Membrane</location>
        <topology evidence="1">Multi-pass membrane protein</topology>
    </subcellularLocation>
</comment>
<comment type="similarity">
    <text evidence="3">Belongs to the OSW5 family.</text>
</comment>
<proteinExistence type="inferred from homology"/>
<keyword id="KW-0472">Membrane</keyword>
<keyword id="KW-1185">Reference proteome</keyword>
<keyword id="KW-0749">Sporulation</keyword>
<keyword id="KW-0812">Transmembrane</keyword>
<keyword id="KW-1133">Transmembrane helix</keyword>
<sequence>MIVSFSTVYFFIYLLLFVSIGLTSSLFIVPLLGASFAFASGVVIFGFLSNVTFKSAQTIYIKVDKRLKFILAKMSSFTNGNESEKNVDVPLLQQTKKRHSQIQSKLKNSFNTNINNNNLTNNDNIVTSTTRGIDVPLDTNNSVTSAIARSLETRADSKIATN</sequence>
<name>OSW5_VANPO</name>
<dbReference type="EMBL" id="DS480389">
    <property type="protein sequence ID" value="EDO18474.1"/>
    <property type="molecule type" value="Genomic_DNA"/>
</dbReference>
<dbReference type="RefSeq" id="XP_001646332.1">
    <property type="nucleotide sequence ID" value="XM_001646282.1"/>
</dbReference>
<dbReference type="SMR" id="A7TH22"/>
<dbReference type="FunCoup" id="A7TH22">
    <property type="interactions" value="14"/>
</dbReference>
<dbReference type="STRING" id="436907.A7TH22"/>
<dbReference type="GeneID" id="5546761"/>
<dbReference type="KEGG" id="vpo:Kpol_1032p70"/>
<dbReference type="eggNOG" id="ENOG502SA41">
    <property type="taxonomic scope" value="Eukaryota"/>
</dbReference>
<dbReference type="HOGENOM" id="CLU_1661977_0_0_1"/>
<dbReference type="InParanoid" id="A7TH22"/>
<dbReference type="OMA" id="STVYFFI"/>
<dbReference type="OrthoDB" id="4070176at2759"/>
<dbReference type="PhylomeDB" id="A7TH22"/>
<dbReference type="Proteomes" id="UP000000267">
    <property type="component" value="Unassembled WGS sequence"/>
</dbReference>
<dbReference type="GO" id="GO:0005811">
    <property type="term" value="C:lipid droplet"/>
    <property type="evidence" value="ECO:0007669"/>
    <property type="project" value="EnsemblFungi"/>
</dbReference>
<dbReference type="GO" id="GO:0016020">
    <property type="term" value="C:membrane"/>
    <property type="evidence" value="ECO:0007669"/>
    <property type="project" value="UniProtKB-SubCell"/>
</dbReference>
<dbReference type="GO" id="GO:0044877">
    <property type="term" value="F:protein-containing complex binding"/>
    <property type="evidence" value="ECO:0007669"/>
    <property type="project" value="EnsemblFungi"/>
</dbReference>
<dbReference type="GO" id="GO:0030476">
    <property type="term" value="P:ascospore wall assembly"/>
    <property type="evidence" value="ECO:0007669"/>
    <property type="project" value="EnsemblFungi"/>
</dbReference>
<dbReference type="GO" id="GO:0034389">
    <property type="term" value="P:lipid droplet organization"/>
    <property type="evidence" value="ECO:0007669"/>
    <property type="project" value="EnsemblFungi"/>
</dbReference>
<dbReference type="InterPro" id="IPR031430">
    <property type="entry name" value="Osw5"/>
</dbReference>
<dbReference type="Pfam" id="PF17062">
    <property type="entry name" value="Osw5"/>
    <property type="match status" value="1"/>
</dbReference>
<accession>A7TH22</accession>
<gene>
    <name type="primary">OSW5</name>
    <name type="ORF">Kpol_1032p70</name>
</gene>